<accession>Q86PC9</accession>
<accession>Q8MUB4</accession>
<accession>Q9W2L5</accession>
<feature type="chain" id="PRO_0000400838" description="Protein king tubby">
    <location>
        <begin position="1"/>
        <end position="460"/>
    </location>
</feature>
<feature type="region of interest" description="Disordered" evidence="2">
    <location>
        <begin position="75"/>
        <end position="97"/>
    </location>
</feature>
<feature type="region of interest" description="Disordered" evidence="2">
    <location>
        <begin position="115"/>
        <end position="208"/>
    </location>
</feature>
<feature type="compositionally biased region" description="Polar residues" evidence="2">
    <location>
        <begin position="85"/>
        <end position="97"/>
    </location>
</feature>
<feature type="compositionally biased region" description="Low complexity" evidence="2">
    <location>
        <begin position="130"/>
        <end position="145"/>
    </location>
</feature>
<feature type="compositionally biased region" description="Gly residues" evidence="2">
    <location>
        <begin position="194"/>
        <end position="203"/>
    </location>
</feature>
<feature type="modified residue" description="Phosphoserine" evidence="6">
    <location>
        <position position="153"/>
    </location>
</feature>
<feature type="splice variant" id="VSP_040028" description="In isoform A." evidence="11 12">
    <location>
        <begin position="1"/>
        <end position="17"/>
    </location>
</feature>
<feature type="splice variant" id="VSP_058159" description="In isoform C.">
    <original>E</original>
    <variation>EGKWSYTPRK</variation>
    <location>
        <position position="105"/>
    </location>
</feature>
<feature type="mutagenesis site" description="In Muta; reduced iav expression in the cilia but is not required for lav or nompC localization in the cilia." evidence="9">
    <original>QKR</original>
    <variation>AAA</variation>
    <location>
        <begin position="24"/>
        <end position="26"/>
    </location>
</feature>
<feature type="mutagenesis site" description="In Mutb; reduced iav expression in the cilia but is not required for lav or nompC localization in the cilia. Decrease in extracellular sound-evoked potentials. Sounds-evoked potentials, and localization of ktub, iav and nompC is partially restored in a ktub and INPP5E double mutant background." evidence="9 10">
    <original>KLR</original>
    <variation>ALA</variation>
    <location>
        <begin position="292"/>
        <end position="294"/>
    </location>
</feature>
<feature type="sequence conflict" description="In Ref. 1; AAM91018." evidence="13" ref="1">
    <original>G</original>
    <variation>A</variation>
    <location>
        <position position="3"/>
    </location>
</feature>
<feature type="sequence conflict" description="In Ref. 1; AAM91018." evidence="13" ref="1">
    <original>S</original>
    <variation>P</variation>
    <location>
        <position position="182"/>
    </location>
</feature>
<dbReference type="EMBL" id="AF527823">
    <property type="protein sequence ID" value="AAM91018.1"/>
    <property type="molecule type" value="mRNA"/>
</dbReference>
<dbReference type="EMBL" id="AE013599">
    <property type="protein sequence ID" value="AAF46675.2"/>
    <property type="molecule type" value="Genomic_DNA"/>
</dbReference>
<dbReference type="EMBL" id="AE013599">
    <property type="protein sequence ID" value="AAS64753.1"/>
    <property type="molecule type" value="Genomic_DNA"/>
</dbReference>
<dbReference type="EMBL" id="AY060625">
    <property type="protein sequence ID" value="AAL28173.1"/>
    <property type="molecule type" value="mRNA"/>
</dbReference>
<dbReference type="EMBL" id="BT003201">
    <property type="protein sequence ID" value="AAO24956.1"/>
    <property type="molecule type" value="mRNA"/>
</dbReference>
<dbReference type="RefSeq" id="NP_611549.2">
    <molecule id="Q86PC9-3"/>
    <property type="nucleotide sequence ID" value="NM_137705.3"/>
</dbReference>
<dbReference type="RefSeq" id="NP_995911.1">
    <molecule id="Q86PC9-1"/>
    <property type="nucleotide sequence ID" value="NM_206189.2"/>
</dbReference>
<dbReference type="SMR" id="Q86PC9"/>
<dbReference type="BioGRID" id="63037">
    <property type="interactions" value="22"/>
</dbReference>
<dbReference type="FunCoup" id="Q86PC9">
    <property type="interactions" value="200"/>
</dbReference>
<dbReference type="IntAct" id="Q86PC9">
    <property type="interactions" value="17"/>
</dbReference>
<dbReference type="STRING" id="7227.FBpp0309666"/>
<dbReference type="iPTMnet" id="Q86PC9"/>
<dbReference type="PaxDb" id="7227-FBpp0088961"/>
<dbReference type="DNASU" id="37400"/>
<dbReference type="EnsemblMetazoa" id="FBtr0089600">
    <molecule id="Q86PC9-1"/>
    <property type="protein sequence ID" value="FBpp0088961"/>
    <property type="gene ID" value="FBgn0015721"/>
</dbReference>
<dbReference type="EnsemblMetazoa" id="FBtr0342842">
    <molecule id="Q86PC9-3"/>
    <property type="protein sequence ID" value="FBpp0309666"/>
    <property type="gene ID" value="FBgn0015721"/>
</dbReference>
<dbReference type="GeneID" id="37400"/>
<dbReference type="KEGG" id="dme:Dmel_CG9398"/>
<dbReference type="UCSC" id="CG9398-RA">
    <property type="organism name" value="d. melanogaster"/>
</dbReference>
<dbReference type="UCSC" id="CG9398-RB">
    <molecule id="Q86PC9-1"/>
    <property type="organism name" value="d. melanogaster"/>
</dbReference>
<dbReference type="AGR" id="FB:FBgn0015721"/>
<dbReference type="CTD" id="37400"/>
<dbReference type="FlyBase" id="FBgn0015721">
    <property type="gene designation" value="ktub"/>
</dbReference>
<dbReference type="VEuPathDB" id="VectorBase:FBgn0015721"/>
<dbReference type="eggNOG" id="KOG2502">
    <property type="taxonomic scope" value="Eukaryota"/>
</dbReference>
<dbReference type="GeneTree" id="ENSGT00940000170687"/>
<dbReference type="HOGENOM" id="CLU_028236_1_1_1"/>
<dbReference type="InParanoid" id="Q86PC9"/>
<dbReference type="OMA" id="GYDGPMQ"/>
<dbReference type="OrthoDB" id="8775810at2759"/>
<dbReference type="PhylomeDB" id="Q86PC9"/>
<dbReference type="SignaLink" id="Q86PC9"/>
<dbReference type="BioGRID-ORCS" id="37400">
    <property type="hits" value="0 hits in 3 CRISPR screens"/>
</dbReference>
<dbReference type="ChiTaRS" id="ktub">
    <property type="organism name" value="fly"/>
</dbReference>
<dbReference type="GenomeRNAi" id="37400"/>
<dbReference type="PRO" id="PR:Q86PC9"/>
<dbReference type="Proteomes" id="UP000000803">
    <property type="component" value="Chromosome 2R"/>
</dbReference>
<dbReference type="Bgee" id="FBgn0015721">
    <property type="expression patterns" value="Expressed in mechanosensory neuron of leg chordotonal organ in insect leg and 72 other cell types or tissues"/>
</dbReference>
<dbReference type="GO" id="GO:0060170">
    <property type="term" value="C:ciliary membrane"/>
    <property type="evidence" value="ECO:0007669"/>
    <property type="project" value="UniProtKB-SubCell"/>
</dbReference>
<dbReference type="GO" id="GO:0005929">
    <property type="term" value="C:cilium"/>
    <property type="evidence" value="ECO:0000314"/>
    <property type="project" value="FlyBase"/>
</dbReference>
<dbReference type="GO" id="GO:0005737">
    <property type="term" value="C:cytoplasm"/>
    <property type="evidence" value="ECO:0000314"/>
    <property type="project" value="UniProtKB"/>
</dbReference>
<dbReference type="GO" id="GO:0043025">
    <property type="term" value="C:neuronal cell body"/>
    <property type="evidence" value="ECO:0000314"/>
    <property type="project" value="FlyBase"/>
</dbReference>
<dbReference type="GO" id="GO:0005634">
    <property type="term" value="C:nucleus"/>
    <property type="evidence" value="ECO:0000314"/>
    <property type="project" value="UniProtKB"/>
</dbReference>
<dbReference type="GO" id="GO:0016028">
    <property type="term" value="C:rhabdomere"/>
    <property type="evidence" value="ECO:0000314"/>
    <property type="project" value="FlyBase"/>
</dbReference>
<dbReference type="GO" id="GO:0008289">
    <property type="term" value="F:lipid binding"/>
    <property type="evidence" value="ECO:0007669"/>
    <property type="project" value="UniProtKB-KW"/>
</dbReference>
<dbReference type="GO" id="GO:0006897">
    <property type="term" value="P:endocytosis"/>
    <property type="evidence" value="ECO:0000315"/>
    <property type="project" value="FlyBase"/>
</dbReference>
<dbReference type="GO" id="GO:0042593">
    <property type="term" value="P:glucose homeostasis"/>
    <property type="evidence" value="ECO:0000315"/>
    <property type="project" value="FlyBase"/>
</dbReference>
<dbReference type="GO" id="GO:0016059">
    <property type="term" value="P:negative regulation of opsin-mediated signaling pathway"/>
    <property type="evidence" value="ECO:0000315"/>
    <property type="project" value="FlyBase"/>
</dbReference>
<dbReference type="GO" id="GO:0061512">
    <property type="term" value="P:protein localization to cilium"/>
    <property type="evidence" value="ECO:0000315"/>
    <property type="project" value="FlyBase"/>
</dbReference>
<dbReference type="GO" id="GO:0009744">
    <property type="term" value="P:response to sucrose"/>
    <property type="evidence" value="ECO:0000315"/>
    <property type="project" value="FlyBase"/>
</dbReference>
<dbReference type="GO" id="GO:0007605">
    <property type="term" value="P:sensory perception of sound"/>
    <property type="evidence" value="ECO:0000315"/>
    <property type="project" value="FlyBase"/>
</dbReference>
<dbReference type="GO" id="GO:0070328">
    <property type="term" value="P:triglyceride homeostasis"/>
    <property type="evidence" value="ECO:0000315"/>
    <property type="project" value="FlyBase"/>
</dbReference>
<dbReference type="FunFam" id="3.20.90.10:FF:000001">
    <property type="entry name" value="Tubby-like protein"/>
    <property type="match status" value="1"/>
</dbReference>
<dbReference type="Gene3D" id="3.20.90.10">
    <property type="entry name" value="Tubby Protein, Chain A"/>
    <property type="match status" value="1"/>
</dbReference>
<dbReference type="InterPro" id="IPR025659">
    <property type="entry name" value="Tubby-like_C"/>
</dbReference>
<dbReference type="InterPro" id="IPR000007">
    <property type="entry name" value="Tubby_C"/>
</dbReference>
<dbReference type="InterPro" id="IPR018066">
    <property type="entry name" value="Tubby_C_CS"/>
</dbReference>
<dbReference type="PANTHER" id="PTHR16517:SF7">
    <property type="entry name" value="PROTEIN KING TUBBY"/>
    <property type="match status" value="1"/>
</dbReference>
<dbReference type="PANTHER" id="PTHR16517">
    <property type="entry name" value="TUBBY-RELATED"/>
    <property type="match status" value="1"/>
</dbReference>
<dbReference type="Pfam" id="PF01167">
    <property type="entry name" value="Tub"/>
    <property type="match status" value="1"/>
</dbReference>
<dbReference type="PRINTS" id="PR01573">
    <property type="entry name" value="SUPERTUBBY"/>
</dbReference>
<dbReference type="SUPFAM" id="SSF54518">
    <property type="entry name" value="Tubby C-terminal domain-like"/>
    <property type="match status" value="1"/>
</dbReference>
<dbReference type="PROSITE" id="PS01200">
    <property type="entry name" value="TUB_1"/>
    <property type="match status" value="1"/>
</dbReference>
<dbReference type="PROSITE" id="PS01201">
    <property type="entry name" value="TUB_2"/>
    <property type="match status" value="1"/>
</dbReference>
<name>TULP_DROME</name>
<protein>
    <recommendedName>
        <fullName evidence="11">Protein king tubby</fullName>
    </recommendedName>
</protein>
<reference evidence="13 15" key="1">
    <citation type="journal article" date="2002" name="Mech. Dev.">
        <title>Structure and expression patterns of Drosophila TULP and TUSP, members of the tubby-like gene family.</title>
        <authorList>
            <person name="Ronshaugen M."/>
            <person name="McGinnis N."/>
            <person name="Inglis D."/>
            <person name="Chou D."/>
            <person name="Zhao J."/>
            <person name="McGinnis W."/>
        </authorList>
    </citation>
    <scope>NUCLEOTIDE SEQUENCE [MRNA] (ISOFORM B)</scope>
    <scope>SUBCELLULAR LOCATION</scope>
    <scope>ALTERNATIVE SPLICING</scope>
    <scope>TISSUE SPECIFICITY</scope>
    <scope>DEVELOPMENTAL STAGE</scope>
</reference>
<reference evidence="17" key="2">
    <citation type="journal article" date="2000" name="Science">
        <title>The genome sequence of Drosophila melanogaster.</title>
        <authorList>
            <person name="Adams M.D."/>
            <person name="Celniker S.E."/>
            <person name="Holt R.A."/>
            <person name="Evans C.A."/>
            <person name="Gocayne J.D."/>
            <person name="Amanatides P.G."/>
            <person name="Scherer S.E."/>
            <person name="Li P.W."/>
            <person name="Hoskins R.A."/>
            <person name="Galle R.F."/>
            <person name="George R.A."/>
            <person name="Lewis S.E."/>
            <person name="Richards S."/>
            <person name="Ashburner M."/>
            <person name="Henderson S.N."/>
            <person name="Sutton G.G."/>
            <person name="Wortman J.R."/>
            <person name="Yandell M.D."/>
            <person name="Zhang Q."/>
            <person name="Chen L.X."/>
            <person name="Brandon R.C."/>
            <person name="Rogers Y.-H.C."/>
            <person name="Blazej R.G."/>
            <person name="Champe M."/>
            <person name="Pfeiffer B.D."/>
            <person name="Wan K.H."/>
            <person name="Doyle C."/>
            <person name="Baxter E.G."/>
            <person name="Helt G."/>
            <person name="Nelson C.R."/>
            <person name="Miklos G.L.G."/>
            <person name="Abril J.F."/>
            <person name="Agbayani A."/>
            <person name="An H.-J."/>
            <person name="Andrews-Pfannkoch C."/>
            <person name="Baldwin D."/>
            <person name="Ballew R.M."/>
            <person name="Basu A."/>
            <person name="Baxendale J."/>
            <person name="Bayraktaroglu L."/>
            <person name="Beasley E.M."/>
            <person name="Beeson K.Y."/>
            <person name="Benos P.V."/>
            <person name="Berman B.P."/>
            <person name="Bhandari D."/>
            <person name="Bolshakov S."/>
            <person name="Borkova D."/>
            <person name="Botchan M.R."/>
            <person name="Bouck J."/>
            <person name="Brokstein P."/>
            <person name="Brottier P."/>
            <person name="Burtis K.C."/>
            <person name="Busam D.A."/>
            <person name="Butler H."/>
            <person name="Cadieu E."/>
            <person name="Center A."/>
            <person name="Chandra I."/>
            <person name="Cherry J.M."/>
            <person name="Cawley S."/>
            <person name="Dahlke C."/>
            <person name="Davenport L.B."/>
            <person name="Davies P."/>
            <person name="de Pablos B."/>
            <person name="Delcher A."/>
            <person name="Deng Z."/>
            <person name="Mays A.D."/>
            <person name="Dew I."/>
            <person name="Dietz S.M."/>
            <person name="Dodson K."/>
            <person name="Doup L.E."/>
            <person name="Downes M."/>
            <person name="Dugan-Rocha S."/>
            <person name="Dunkov B.C."/>
            <person name="Dunn P."/>
            <person name="Durbin K.J."/>
            <person name="Evangelista C.C."/>
            <person name="Ferraz C."/>
            <person name="Ferriera S."/>
            <person name="Fleischmann W."/>
            <person name="Fosler C."/>
            <person name="Gabrielian A.E."/>
            <person name="Garg N.S."/>
            <person name="Gelbart W.M."/>
            <person name="Glasser K."/>
            <person name="Glodek A."/>
            <person name="Gong F."/>
            <person name="Gorrell J.H."/>
            <person name="Gu Z."/>
            <person name="Guan P."/>
            <person name="Harris M."/>
            <person name="Harris N.L."/>
            <person name="Harvey D.A."/>
            <person name="Heiman T.J."/>
            <person name="Hernandez J.R."/>
            <person name="Houck J."/>
            <person name="Hostin D."/>
            <person name="Houston K.A."/>
            <person name="Howland T.J."/>
            <person name="Wei M.-H."/>
            <person name="Ibegwam C."/>
            <person name="Jalali M."/>
            <person name="Kalush F."/>
            <person name="Karpen G.H."/>
            <person name="Ke Z."/>
            <person name="Kennison J.A."/>
            <person name="Ketchum K.A."/>
            <person name="Kimmel B.E."/>
            <person name="Kodira C.D."/>
            <person name="Kraft C.L."/>
            <person name="Kravitz S."/>
            <person name="Kulp D."/>
            <person name="Lai Z."/>
            <person name="Lasko P."/>
            <person name="Lei Y."/>
            <person name="Levitsky A.A."/>
            <person name="Li J.H."/>
            <person name="Li Z."/>
            <person name="Liang Y."/>
            <person name="Lin X."/>
            <person name="Liu X."/>
            <person name="Mattei B."/>
            <person name="McIntosh T.C."/>
            <person name="McLeod M.P."/>
            <person name="McPherson D."/>
            <person name="Merkulov G."/>
            <person name="Milshina N.V."/>
            <person name="Mobarry C."/>
            <person name="Morris J."/>
            <person name="Moshrefi A."/>
            <person name="Mount S.M."/>
            <person name="Moy M."/>
            <person name="Murphy B."/>
            <person name="Murphy L."/>
            <person name="Muzny D.M."/>
            <person name="Nelson D.L."/>
            <person name="Nelson D.R."/>
            <person name="Nelson K.A."/>
            <person name="Nixon K."/>
            <person name="Nusskern D.R."/>
            <person name="Pacleb J.M."/>
            <person name="Palazzolo M."/>
            <person name="Pittman G.S."/>
            <person name="Pan S."/>
            <person name="Pollard J."/>
            <person name="Puri V."/>
            <person name="Reese M.G."/>
            <person name="Reinert K."/>
            <person name="Remington K."/>
            <person name="Saunders R.D.C."/>
            <person name="Scheeler F."/>
            <person name="Shen H."/>
            <person name="Shue B.C."/>
            <person name="Siden-Kiamos I."/>
            <person name="Simpson M."/>
            <person name="Skupski M.P."/>
            <person name="Smith T.J."/>
            <person name="Spier E."/>
            <person name="Spradling A.C."/>
            <person name="Stapleton M."/>
            <person name="Strong R."/>
            <person name="Sun E."/>
            <person name="Svirskas R."/>
            <person name="Tector C."/>
            <person name="Turner R."/>
            <person name="Venter E."/>
            <person name="Wang A.H."/>
            <person name="Wang X."/>
            <person name="Wang Z.-Y."/>
            <person name="Wassarman D.A."/>
            <person name="Weinstock G.M."/>
            <person name="Weissenbach J."/>
            <person name="Williams S.M."/>
            <person name="Woodage T."/>
            <person name="Worley K.C."/>
            <person name="Wu D."/>
            <person name="Yang S."/>
            <person name="Yao Q.A."/>
            <person name="Ye J."/>
            <person name="Yeh R.-F."/>
            <person name="Zaveri J.S."/>
            <person name="Zhan M."/>
            <person name="Zhang G."/>
            <person name="Zhao Q."/>
            <person name="Zheng L."/>
            <person name="Zheng X.H."/>
            <person name="Zhong F.N."/>
            <person name="Zhong W."/>
            <person name="Zhou X."/>
            <person name="Zhu S.C."/>
            <person name="Zhu X."/>
            <person name="Smith H.O."/>
            <person name="Gibbs R.A."/>
            <person name="Myers E.W."/>
            <person name="Rubin G.M."/>
            <person name="Venter J.C."/>
        </authorList>
    </citation>
    <scope>NUCLEOTIDE SEQUENCE [LARGE SCALE GENOMIC DNA]</scope>
    <source>
        <strain evidence="3">Berkeley</strain>
    </source>
</reference>
<reference evidence="13 17" key="3">
    <citation type="journal article" date="2002" name="Genome Biol.">
        <title>Annotation of the Drosophila melanogaster euchromatic genome: a systematic review.</title>
        <authorList>
            <person name="Misra S."/>
            <person name="Crosby M.A."/>
            <person name="Mungall C.J."/>
            <person name="Matthews B.B."/>
            <person name="Campbell K.S."/>
            <person name="Hradecky P."/>
            <person name="Huang Y."/>
            <person name="Kaminker J.S."/>
            <person name="Millburn G.H."/>
            <person name="Prochnik S.E."/>
            <person name="Smith C.D."/>
            <person name="Tupy J.L."/>
            <person name="Whitfield E.J."/>
            <person name="Bayraktaroglu L."/>
            <person name="Berman B.P."/>
            <person name="Bettencourt B.R."/>
            <person name="Celniker S.E."/>
            <person name="de Grey A.D.N.J."/>
            <person name="Drysdale R.A."/>
            <person name="Harris N.L."/>
            <person name="Richter J."/>
            <person name="Russo S."/>
            <person name="Schroeder A.J."/>
            <person name="Shu S.Q."/>
            <person name="Stapleton M."/>
            <person name="Yamada C."/>
            <person name="Ashburner M."/>
            <person name="Gelbart W.M."/>
            <person name="Rubin G.M."/>
            <person name="Lewis S.E."/>
        </authorList>
    </citation>
    <scope>GENOME REANNOTATION</scope>
    <scope>ALTERNATIVE SPLICING</scope>
    <source>
        <strain>Berkeley</strain>
    </source>
</reference>
<reference evidence="13 14" key="4">
    <citation type="journal article" date="2002" name="Genome Biol.">
        <title>A Drosophila full-length cDNA resource.</title>
        <authorList>
            <person name="Stapleton M."/>
            <person name="Carlson J.W."/>
            <person name="Brokstein P."/>
            <person name="Yu C."/>
            <person name="Champe M."/>
            <person name="George R.A."/>
            <person name="Guarin H."/>
            <person name="Kronmiller B."/>
            <person name="Pacleb J.M."/>
            <person name="Park S."/>
            <person name="Wan K.H."/>
            <person name="Rubin G.M."/>
            <person name="Celniker S.E."/>
        </authorList>
    </citation>
    <scope>NUCLEOTIDE SEQUENCE [LARGE SCALE MRNA] (ISOFORM A)</scope>
    <source>
        <strain evidence="14">Berkeley</strain>
        <tissue evidence="5">Head</tissue>
    </source>
</reference>
<reference evidence="13 16" key="5">
    <citation type="submission" date="2006-06" db="EMBL/GenBank/DDBJ databases">
        <authorList>
            <person name="Stapleton M."/>
            <person name="Carlson J.W."/>
            <person name="Chavez C."/>
            <person name="Frise E."/>
            <person name="George R.A."/>
            <person name="Pacleb J.M."/>
            <person name="Park S."/>
            <person name="Wan K.H."/>
            <person name="Yu C."/>
            <person name="Celniker S.E."/>
        </authorList>
    </citation>
    <scope>NUCLEOTIDE SEQUENCE [LARGE SCALE MRNA] (ISOFORM B)</scope>
    <source>
        <strain evidence="16">Berkeley</strain>
        <tissue>Embryo</tissue>
    </source>
</reference>
<reference evidence="13" key="6">
    <citation type="journal article" date="2008" name="J. Proteome Res.">
        <title>Phosphoproteome analysis of Drosophila melanogaster embryos.</title>
        <authorList>
            <person name="Zhai B."/>
            <person name="Villen J."/>
            <person name="Beausoleil S.A."/>
            <person name="Mintseris J."/>
            <person name="Gygi S.P."/>
        </authorList>
    </citation>
    <scope>PHOSPHORYLATION [LARGE SCALE ANALYSIS] AT SER-153</scope>
    <scope>IDENTIFICATION BY MASS SPECTROMETRY</scope>
    <source>
        <tissue evidence="6">Embryo</tissue>
    </source>
</reference>
<reference key="7">
    <citation type="journal article" date="2012" name="J. Biomed. Sci.">
        <title>Drosophila king tubby (ktub) mediates light-induced rhodopsin endocytosis and retinal degeneration.</title>
        <authorList>
            <person name="Chen S.F."/>
            <person name="Tsai Y.C."/>
            <person name="Fan S.S."/>
        </authorList>
    </citation>
    <scope>FUNCTION</scope>
    <scope>SUBCELLULAR LOCATION</scope>
    <scope>TISSUE SPECIFICITY</scope>
    <scope>DOMAIN</scope>
</reference>
<reference key="8">
    <citation type="journal article" date="2013" name="J. Biol. Chem.">
        <title>Role of fat body lipogenesis in protection against the effects of caloric overload in Drosophila.</title>
        <authorList>
            <person name="Musselman L.P."/>
            <person name="Fink J.L."/>
            <person name="Ramachandran P.V."/>
            <person name="Patterson B.W."/>
            <person name="Okunade A.L."/>
            <person name="Maier E."/>
            <person name="Brent M.R."/>
            <person name="Turk J."/>
            <person name="Baranski T.J."/>
        </authorList>
    </citation>
    <scope>FUNCTION</scope>
    <scope>DISRUPTION PHENOTYPE</scope>
</reference>
<reference key="9">
    <citation type="journal article" date="2013" name="PLoS Genet.">
        <title>dTULP, the Drosophila melanogaster homolog of tubby, regulates transient receptor potential channel localization in cilia.</title>
        <authorList>
            <person name="Park J."/>
            <person name="Lee J."/>
            <person name="Shim J."/>
            <person name="Han W."/>
            <person name="Lee J."/>
            <person name="Bae Y.C."/>
            <person name="Chung Y.D."/>
            <person name="Kim C.H."/>
            <person name="Moon S.J."/>
        </authorList>
    </citation>
    <scope>FUNCTION</scope>
    <scope>SUBCELLULAR LOCATION</scope>
    <scope>TISSUE SPECIFICITY</scope>
    <scope>DISRUPTION PHENOTYPE</scope>
    <scope>MUTAGENESIS OF 24-GLN--ARG-26 AND 292-LYS--ARG-294</scope>
</reference>
<reference key="10">
    <citation type="journal article" date="2015" name="Cell Rep.">
        <title>Ciliary phosphoinositide regulates ciliary protein trafficking in Drosophila.</title>
        <authorList>
            <person name="Park J."/>
            <person name="Lee N."/>
            <person name="Kavoussi A."/>
            <person name="Seo J.T."/>
            <person name="Kim C.H."/>
            <person name="Moon S.J."/>
        </authorList>
    </citation>
    <scope>FUNCTION</scope>
    <scope>SUBCELLULAR LOCATION</scope>
    <scope>TISSUE SPECIFICITY</scope>
    <scope>MUTAGENESIS OF 292-LYS--ARG-294</scope>
</reference>
<gene>
    <name type="primary">ktub</name>
    <name type="synonym">Tulp</name>
    <name type="ORF">CG9398</name>
</gene>
<keyword id="KW-0025">Alternative splicing</keyword>
<keyword id="KW-1003">Cell membrane</keyword>
<keyword id="KW-0966">Cell projection</keyword>
<keyword id="KW-0963">Cytoplasm</keyword>
<keyword id="KW-0446">Lipid-binding</keyword>
<keyword id="KW-0472">Membrane</keyword>
<keyword id="KW-0539">Nucleus</keyword>
<keyword id="KW-0597">Phosphoprotein</keyword>
<keyword id="KW-1185">Reference proteome</keyword>
<sequence length="460" mass="51281">MSGINSRNQKMEQQRQLMEAYIRQKRASPGMVQASDLQINRPMSGMRSNSRELHAYDGPMQFISSPQNPDQILTNGSPGGINPVAMNTSRNHSNNMRSLSTINQEADLIEEISSHELEDEESSPVTVIEQHQQSASHSANSTQSQKPRARQHSFSDNLDEDDYTNRNVAGAAPVRPAGMASSPYKDATLDGSSNGTGNGTGGESEGDVIGNIDQFVMQPAPQGVLYKCRITRDRKGMDRGLFPIYYLHLERDYGKKIFLLGGRKRKKSKTSNYIVSCDPTDLSRNADGFCGKLRSNVFGTSFTVFDNGNKESTESPRLDLAVIIYDTNILGFKGPRNMTVILPGMTEDDQRVKISSADPKQQGILDLWKMKNMDNIVELHNKTPVWNDETQSYVLNFHGRVTQASVKNFQLVHDSDPEYIVMQFGRTSEDVFTMDYRYPLCAMQAFAIALSSFDGKIACE</sequence>
<evidence type="ECO:0000255" key="1"/>
<evidence type="ECO:0000256" key="2">
    <source>
        <dbReference type="SAM" id="MobiDB-lite"/>
    </source>
</evidence>
<evidence type="ECO:0000269" key="3">
    <source>
    </source>
</evidence>
<evidence type="ECO:0000269" key="4">
    <source>
    </source>
</evidence>
<evidence type="ECO:0000269" key="5">
    <source>
    </source>
</evidence>
<evidence type="ECO:0000269" key="6">
    <source>
    </source>
</evidence>
<evidence type="ECO:0000269" key="7">
    <source>
    </source>
</evidence>
<evidence type="ECO:0000269" key="8">
    <source>
    </source>
</evidence>
<evidence type="ECO:0000269" key="9">
    <source>
    </source>
</evidence>
<evidence type="ECO:0000269" key="10">
    <source>
    </source>
</evidence>
<evidence type="ECO:0000303" key="11">
    <source>
    </source>
</evidence>
<evidence type="ECO:0000303" key="12">
    <source>
    </source>
</evidence>
<evidence type="ECO:0000305" key="13"/>
<evidence type="ECO:0000312" key="14">
    <source>
        <dbReference type="EMBL" id="AAL28173.1"/>
    </source>
</evidence>
<evidence type="ECO:0000312" key="15">
    <source>
        <dbReference type="EMBL" id="AAM91018.1"/>
    </source>
</evidence>
<evidence type="ECO:0000312" key="16">
    <source>
        <dbReference type="EMBL" id="AAO24956.1"/>
    </source>
</evidence>
<evidence type="ECO:0000312" key="17">
    <source>
        <dbReference type="EMBL" id="AAS64753.1"/>
    </source>
</evidence>
<evidence type="ECO:0000312" key="18">
    <source>
        <dbReference type="FlyBase" id="FBgn0015721"/>
    </source>
</evidence>
<proteinExistence type="evidence at protein level"/>
<comment type="function">
    <text evidence="7 8 9 10">Functions in regulating protein trafficking, retinal maintenance and lipid storage (PubMed:23228091, PubMed:23355467, PubMed:24068974, PubMed:26723017). Protects photoreceptor cells R1 to R6 against light-induced retinal degeneration by stimulating norpA-mediated endocytosis of the rhodopsin ninaE (Rh1) (PubMed:23228091). In the auditory receptor neurons, functions as a cilia trafficking regulator of various transient receptor potential (TRP) channel components including iav and nompC (PubMed:24068974, PubMed:26723017). Likely to deliver pre-ciliary vesicles containing membrane proteins such as iav and nompC to the intraflagellar transport complex (IFT) at the cilia base (PubMed:24068974, PubMed:26723017). Plays a role in the inhibition of fat storage (PubMed:23355467).</text>
</comment>
<comment type="subcellular location">
    <subcellularLocation>
        <location evidence="4 7 9">Cytoplasm</location>
    </subcellularLocation>
    <subcellularLocation>
        <location evidence="4 7 9">Nucleus</location>
    </subcellularLocation>
    <subcellularLocation>
        <location evidence="9 10">Cell projection</location>
        <location evidence="9 10">Cilium membrane</location>
        <topology evidence="9 10">Peripheral membrane protein</topology>
    </subcellularLocation>
    <subcellularLocation>
        <location evidence="7">Cell projection</location>
        <location evidence="7">Rhabdomere</location>
    </subcellularLocation>
    <text evidence="4 7 9 10">Detected in the cytoplasm and nucleus of the chordotonal neurons (PubMed:12204260, PubMed:24068974). PtdIns 4,5-P2 binds to and regulates its localization to the ciliary base (PubMed:26723017). In the dark, localizes mainly to the rhabdomere domain of photoreceptor cells R1 to R6 (PubMed:23228091). When dark-reared flies are moved into the light, the protein translocates to the cytoplasm (PubMed:23228091). Under normal conditions (12 hr light/12 hr dark), localized mainly in the nucleus of photoreceptor cells with minor staining in the cytoplasm (PubMed:23228091).</text>
</comment>
<comment type="alternative products">
    <event type="alternative splicing"/>
    <isoform>
        <id>Q86PC9-1</id>
        <name evidence="4">B</name>
        <name evidence="4">TULP-L</name>
        <sequence type="displayed"/>
    </isoform>
    <isoform>
        <id>Q86PC9-2</id>
        <name evidence="4">A</name>
        <name evidence="4">TULP-S</name>
        <sequence type="described" ref="VSP_040028"/>
    </isoform>
    <isoform>
        <id>Q86PC9-3</id>
        <name evidence="18">C</name>
        <sequence type="described" ref="VSP_058159"/>
    </isoform>
</comment>
<comment type="tissue specificity">
    <text evidence="4 7 9 10">Detected in sensory neurons which have a ciliary structure such as the chordotonal neurons, Orco-expressing olfactory receptor neurons, labellar gustatory receptor neurons and in the femoral chordotonal organ (at protein level) (PubMed:24068974, PubMed:26723017). In the chordotonal neurons of the Johnston's organ expressed in the proximal to distal cilia, with lower levels of expression in the distal portion (at protein level) (PubMed:24068974). Also detected in the salivary glands and antenna (at protein level) (PubMed:24068974). Expressed in photoreceptor cells (at protein level) (PubMed:23228091). At stage 9 expression is detected in a subset of neuroblasts (PubMed:12204260). By stage 12 expression is found in both the CNS and PNS (PubMed:12204260). In late-stage embryos, expression persists in the CNS and PNS with more abundant expression in the antennal-maxillary sensory neurons and in bilateral groups of cells in the brain (PubMed:12204260).</text>
</comment>
<comment type="developmental stage">
    <text evidence="4">Most abundant at 2-8 hours of embryonic development.</text>
</comment>
<comment type="domain">
    <text evidence="7">The C-terminus is important for mediating light-induced rhodopsin endocytosis.</text>
</comment>
<comment type="disruption phenotype">
    <text evidence="8 9">Viable and fertile however flies display a decreased climbing index and extracellular sound-evoked potentials are completely abolished (PubMed:24068974). This hearing defect is likely due to the abnormal localization of the two transient receptor potential channels iav and nompC, as well as eys within the cilia (PubMed:24068974). There is no localization of iav to the proximal cilia, and nompc which is typically found in the distal cilia, is localized to the proximal cilia (PubMed:24068974). Also eys displays a much broader expression pattern (PubMed:24068974). RNAi-mediated knockdown in the fat body of larvae fed a high sugar diet, results in an increase in body weight, an increase in triglyceride accumulation and a decrease in hemolymph glucose levels (PubMed:23355467).</text>
</comment>
<comment type="similarity">
    <text evidence="1">Belongs to the TUB family.</text>
</comment>
<organism>
    <name type="scientific">Drosophila melanogaster</name>
    <name type="common">Fruit fly</name>
    <dbReference type="NCBI Taxonomy" id="7227"/>
    <lineage>
        <taxon>Eukaryota</taxon>
        <taxon>Metazoa</taxon>
        <taxon>Ecdysozoa</taxon>
        <taxon>Arthropoda</taxon>
        <taxon>Hexapoda</taxon>
        <taxon>Insecta</taxon>
        <taxon>Pterygota</taxon>
        <taxon>Neoptera</taxon>
        <taxon>Endopterygota</taxon>
        <taxon>Diptera</taxon>
        <taxon>Brachycera</taxon>
        <taxon>Muscomorpha</taxon>
        <taxon>Ephydroidea</taxon>
        <taxon>Drosophilidae</taxon>
        <taxon>Drosophila</taxon>
        <taxon>Sophophora</taxon>
    </lineage>
</organism>